<feature type="initiator methionine" description="Removed" evidence="5 12 13 14 15 16">
    <location>
        <position position="1"/>
    </location>
</feature>
<feature type="chain" id="PRO_0000122323" description="Small ribosomal subunit protein eS12">
    <location>
        <begin position="2"/>
        <end position="132"/>
    </location>
</feature>
<feature type="modified residue" description="N-acetylalanine" evidence="5 12 13 14 15 16">
    <location>
        <position position="2"/>
    </location>
</feature>
<feature type="modified residue" description="N6-succinyllysine" evidence="1">
    <location>
        <position position="129"/>
    </location>
</feature>
<feature type="sequence conflict" description="In Ref. 1; CAA37582." evidence="7" ref="1">
    <original>L</original>
    <variation>Q</variation>
    <location>
        <position position="52"/>
    </location>
</feature>
<feature type="sequence conflict" description="In Ref. 1; CAA37582." evidence="7" ref="1">
    <original>C</original>
    <variation>L</variation>
    <location>
        <position position="69"/>
    </location>
</feature>
<feature type="sequence conflict" description="In Ref. 1; CAA37582." evidence="7" ref="1">
    <original>K</original>
    <variation>N</variation>
    <location>
        <position position="99"/>
    </location>
</feature>
<feature type="helix" evidence="21">
    <location>
        <begin position="15"/>
        <end position="27"/>
    </location>
</feature>
<feature type="strand" evidence="21">
    <location>
        <begin position="32"/>
        <end position="34"/>
    </location>
</feature>
<feature type="helix" evidence="21">
    <location>
        <begin position="35"/>
        <end position="43"/>
    </location>
</feature>
<feature type="strand" evidence="21">
    <location>
        <begin position="49"/>
        <end position="54"/>
    </location>
</feature>
<feature type="helix" evidence="21">
    <location>
        <begin position="59"/>
        <end position="71"/>
    </location>
</feature>
<feature type="strand" evidence="21">
    <location>
        <begin position="75"/>
        <end position="80"/>
    </location>
</feature>
<feature type="helix" evidence="21">
    <location>
        <begin position="82"/>
        <end position="89"/>
    </location>
</feature>
<feature type="strand" evidence="18">
    <location>
        <begin position="92"/>
        <end position="94"/>
    </location>
</feature>
<feature type="strand" evidence="17">
    <location>
        <begin position="96"/>
        <end position="98"/>
    </location>
</feature>
<feature type="strand" evidence="18">
    <location>
        <begin position="100"/>
        <end position="102"/>
    </location>
</feature>
<feature type="strand" evidence="21">
    <location>
        <begin position="107"/>
        <end position="112"/>
    </location>
</feature>
<feature type="strand" evidence="19">
    <location>
        <begin position="115"/>
        <end position="117"/>
    </location>
</feature>
<feature type="strand" evidence="20">
    <location>
        <begin position="118"/>
        <end position="120"/>
    </location>
</feature>
<feature type="helix" evidence="21">
    <location>
        <begin position="121"/>
        <end position="125"/>
    </location>
</feature>
<feature type="helix" evidence="22">
    <location>
        <begin position="126"/>
        <end position="128"/>
    </location>
</feature>
<feature type="turn" evidence="17">
    <location>
        <begin position="129"/>
        <end position="131"/>
    </location>
</feature>
<keyword id="KW-0002">3D-structure</keyword>
<keyword id="KW-0007">Acetylation</keyword>
<keyword id="KW-0963">Cytoplasm</keyword>
<keyword id="KW-0903">Direct protein sequencing</keyword>
<keyword id="KW-0539">Nucleus</keyword>
<keyword id="KW-1267">Proteomics identification</keyword>
<keyword id="KW-1185">Reference proteome</keyword>
<keyword id="KW-0687">Ribonucleoprotein</keyword>
<keyword id="KW-0689">Ribosomal protein</keyword>
<reference key="1">
    <citation type="journal article" date="1991" name="Nucleic Acids Res.">
        <title>cDNA and predicted amino acid sequences of the human ribosomal protein genes rpS12 and rpL17.</title>
        <authorList>
            <person name="Herault Y."/>
            <person name="Michel D."/>
            <person name="Chatelain G."/>
            <person name="Brun G."/>
        </authorList>
    </citation>
    <scope>NUCLEOTIDE SEQUENCE [MRNA]</scope>
</reference>
<reference key="2">
    <citation type="journal article" date="2002" name="Genome Res.">
        <title>The human ribosomal protein genes: sequencing and comparative analysis of 73 genes.</title>
        <authorList>
            <person name="Yoshihama M."/>
            <person name="Uechi T."/>
            <person name="Asakawa S."/>
            <person name="Kawasaki K."/>
            <person name="Kato S."/>
            <person name="Higa S."/>
            <person name="Maeda N."/>
            <person name="Minoshima S."/>
            <person name="Tanaka T."/>
            <person name="Shimizu N."/>
            <person name="Kenmochi N."/>
        </authorList>
    </citation>
    <scope>NUCLEOTIDE SEQUENCE [GENOMIC DNA]</scope>
</reference>
<reference key="3">
    <citation type="journal article" date="2004" name="Nat. Genet.">
        <title>Complete sequencing and characterization of 21,243 full-length human cDNAs.</title>
        <authorList>
            <person name="Ota T."/>
            <person name="Suzuki Y."/>
            <person name="Nishikawa T."/>
            <person name="Otsuki T."/>
            <person name="Sugiyama T."/>
            <person name="Irie R."/>
            <person name="Wakamatsu A."/>
            <person name="Hayashi K."/>
            <person name="Sato H."/>
            <person name="Nagai K."/>
            <person name="Kimura K."/>
            <person name="Makita H."/>
            <person name="Sekine M."/>
            <person name="Obayashi M."/>
            <person name="Nishi T."/>
            <person name="Shibahara T."/>
            <person name="Tanaka T."/>
            <person name="Ishii S."/>
            <person name="Yamamoto J."/>
            <person name="Saito K."/>
            <person name="Kawai Y."/>
            <person name="Isono Y."/>
            <person name="Nakamura Y."/>
            <person name="Nagahari K."/>
            <person name="Murakami K."/>
            <person name="Yasuda T."/>
            <person name="Iwayanagi T."/>
            <person name="Wagatsuma M."/>
            <person name="Shiratori A."/>
            <person name="Sudo H."/>
            <person name="Hosoiri T."/>
            <person name="Kaku Y."/>
            <person name="Kodaira H."/>
            <person name="Kondo H."/>
            <person name="Sugawara M."/>
            <person name="Takahashi M."/>
            <person name="Kanda K."/>
            <person name="Yokoi T."/>
            <person name="Furuya T."/>
            <person name="Kikkawa E."/>
            <person name="Omura Y."/>
            <person name="Abe K."/>
            <person name="Kamihara K."/>
            <person name="Katsuta N."/>
            <person name="Sato K."/>
            <person name="Tanikawa M."/>
            <person name="Yamazaki M."/>
            <person name="Ninomiya K."/>
            <person name="Ishibashi T."/>
            <person name="Yamashita H."/>
            <person name="Murakawa K."/>
            <person name="Fujimori K."/>
            <person name="Tanai H."/>
            <person name="Kimata M."/>
            <person name="Watanabe M."/>
            <person name="Hiraoka S."/>
            <person name="Chiba Y."/>
            <person name="Ishida S."/>
            <person name="Ono Y."/>
            <person name="Takiguchi S."/>
            <person name="Watanabe S."/>
            <person name="Yosida M."/>
            <person name="Hotuta T."/>
            <person name="Kusano J."/>
            <person name="Kanehori K."/>
            <person name="Takahashi-Fujii A."/>
            <person name="Hara H."/>
            <person name="Tanase T.-O."/>
            <person name="Nomura Y."/>
            <person name="Togiya S."/>
            <person name="Komai F."/>
            <person name="Hara R."/>
            <person name="Takeuchi K."/>
            <person name="Arita M."/>
            <person name="Imose N."/>
            <person name="Musashino K."/>
            <person name="Yuuki H."/>
            <person name="Oshima A."/>
            <person name="Sasaki N."/>
            <person name="Aotsuka S."/>
            <person name="Yoshikawa Y."/>
            <person name="Matsunawa H."/>
            <person name="Ichihara T."/>
            <person name="Shiohata N."/>
            <person name="Sano S."/>
            <person name="Moriya S."/>
            <person name="Momiyama H."/>
            <person name="Satoh N."/>
            <person name="Takami S."/>
            <person name="Terashima Y."/>
            <person name="Suzuki O."/>
            <person name="Nakagawa S."/>
            <person name="Senoh A."/>
            <person name="Mizoguchi H."/>
            <person name="Goto Y."/>
            <person name="Shimizu F."/>
            <person name="Wakebe H."/>
            <person name="Hishigaki H."/>
            <person name="Watanabe T."/>
            <person name="Sugiyama A."/>
            <person name="Takemoto M."/>
            <person name="Kawakami B."/>
            <person name="Yamazaki M."/>
            <person name="Watanabe K."/>
            <person name="Kumagai A."/>
            <person name="Itakura S."/>
            <person name="Fukuzumi Y."/>
            <person name="Fujimori Y."/>
            <person name="Komiyama M."/>
            <person name="Tashiro H."/>
            <person name="Tanigami A."/>
            <person name="Fujiwara T."/>
            <person name="Ono T."/>
            <person name="Yamada K."/>
            <person name="Fujii Y."/>
            <person name="Ozaki K."/>
            <person name="Hirao M."/>
            <person name="Ohmori Y."/>
            <person name="Kawabata A."/>
            <person name="Hikiji T."/>
            <person name="Kobatake N."/>
            <person name="Inagaki H."/>
            <person name="Ikema Y."/>
            <person name="Okamoto S."/>
            <person name="Okitani R."/>
            <person name="Kawakami T."/>
            <person name="Noguchi S."/>
            <person name="Itoh T."/>
            <person name="Shigeta K."/>
            <person name="Senba T."/>
            <person name="Matsumura K."/>
            <person name="Nakajima Y."/>
            <person name="Mizuno T."/>
            <person name="Morinaga M."/>
            <person name="Sasaki M."/>
            <person name="Togashi T."/>
            <person name="Oyama M."/>
            <person name="Hata H."/>
            <person name="Watanabe M."/>
            <person name="Komatsu T."/>
            <person name="Mizushima-Sugano J."/>
            <person name="Satoh T."/>
            <person name="Shirai Y."/>
            <person name="Takahashi Y."/>
            <person name="Nakagawa K."/>
            <person name="Okumura K."/>
            <person name="Nagase T."/>
            <person name="Nomura N."/>
            <person name="Kikuchi H."/>
            <person name="Masuho Y."/>
            <person name="Yamashita R."/>
            <person name="Nakai K."/>
            <person name="Yada T."/>
            <person name="Nakamura Y."/>
            <person name="Ohara O."/>
            <person name="Isogai T."/>
            <person name="Sugano S."/>
        </authorList>
    </citation>
    <scope>NUCLEOTIDE SEQUENCE [LARGE SCALE MRNA]</scope>
    <source>
        <tissue>Testis</tissue>
    </source>
</reference>
<reference key="4">
    <citation type="journal article" date="2003" name="Nature">
        <title>The DNA sequence and analysis of human chromosome 6.</title>
        <authorList>
            <person name="Mungall A.J."/>
            <person name="Palmer S.A."/>
            <person name="Sims S.K."/>
            <person name="Edwards C.A."/>
            <person name="Ashurst J.L."/>
            <person name="Wilming L."/>
            <person name="Jones M.C."/>
            <person name="Horton R."/>
            <person name="Hunt S.E."/>
            <person name="Scott C.E."/>
            <person name="Gilbert J.G.R."/>
            <person name="Clamp M.E."/>
            <person name="Bethel G."/>
            <person name="Milne S."/>
            <person name="Ainscough R."/>
            <person name="Almeida J.P."/>
            <person name="Ambrose K.D."/>
            <person name="Andrews T.D."/>
            <person name="Ashwell R.I.S."/>
            <person name="Babbage A.K."/>
            <person name="Bagguley C.L."/>
            <person name="Bailey J."/>
            <person name="Banerjee R."/>
            <person name="Barker D.J."/>
            <person name="Barlow K.F."/>
            <person name="Bates K."/>
            <person name="Beare D.M."/>
            <person name="Beasley H."/>
            <person name="Beasley O."/>
            <person name="Bird C.P."/>
            <person name="Blakey S.E."/>
            <person name="Bray-Allen S."/>
            <person name="Brook J."/>
            <person name="Brown A.J."/>
            <person name="Brown J.Y."/>
            <person name="Burford D.C."/>
            <person name="Burrill W."/>
            <person name="Burton J."/>
            <person name="Carder C."/>
            <person name="Carter N.P."/>
            <person name="Chapman J.C."/>
            <person name="Clark S.Y."/>
            <person name="Clark G."/>
            <person name="Clee C.M."/>
            <person name="Clegg S."/>
            <person name="Cobley V."/>
            <person name="Collier R.E."/>
            <person name="Collins J.E."/>
            <person name="Colman L.K."/>
            <person name="Corby N.R."/>
            <person name="Coville G.J."/>
            <person name="Culley K.M."/>
            <person name="Dhami P."/>
            <person name="Davies J."/>
            <person name="Dunn M."/>
            <person name="Earthrowl M.E."/>
            <person name="Ellington A.E."/>
            <person name="Evans K.A."/>
            <person name="Faulkner L."/>
            <person name="Francis M.D."/>
            <person name="Frankish A."/>
            <person name="Frankland J."/>
            <person name="French L."/>
            <person name="Garner P."/>
            <person name="Garnett J."/>
            <person name="Ghori M.J."/>
            <person name="Gilby L.M."/>
            <person name="Gillson C.J."/>
            <person name="Glithero R.J."/>
            <person name="Grafham D.V."/>
            <person name="Grant M."/>
            <person name="Gribble S."/>
            <person name="Griffiths C."/>
            <person name="Griffiths M.N.D."/>
            <person name="Hall R."/>
            <person name="Halls K.S."/>
            <person name="Hammond S."/>
            <person name="Harley J.L."/>
            <person name="Hart E.A."/>
            <person name="Heath P.D."/>
            <person name="Heathcott R."/>
            <person name="Holmes S.J."/>
            <person name="Howden P.J."/>
            <person name="Howe K.L."/>
            <person name="Howell G.R."/>
            <person name="Huckle E."/>
            <person name="Humphray S.J."/>
            <person name="Humphries M.D."/>
            <person name="Hunt A.R."/>
            <person name="Johnson C.M."/>
            <person name="Joy A.A."/>
            <person name="Kay M."/>
            <person name="Keenan S.J."/>
            <person name="Kimberley A.M."/>
            <person name="King A."/>
            <person name="Laird G.K."/>
            <person name="Langford C."/>
            <person name="Lawlor S."/>
            <person name="Leongamornlert D.A."/>
            <person name="Leversha M."/>
            <person name="Lloyd C.R."/>
            <person name="Lloyd D.M."/>
            <person name="Loveland J.E."/>
            <person name="Lovell J."/>
            <person name="Martin S."/>
            <person name="Mashreghi-Mohammadi M."/>
            <person name="Maslen G.L."/>
            <person name="Matthews L."/>
            <person name="McCann O.T."/>
            <person name="McLaren S.J."/>
            <person name="McLay K."/>
            <person name="McMurray A."/>
            <person name="Moore M.J.F."/>
            <person name="Mullikin J.C."/>
            <person name="Niblett D."/>
            <person name="Nickerson T."/>
            <person name="Novik K.L."/>
            <person name="Oliver K."/>
            <person name="Overton-Larty E.K."/>
            <person name="Parker A."/>
            <person name="Patel R."/>
            <person name="Pearce A.V."/>
            <person name="Peck A.I."/>
            <person name="Phillimore B.J.C.T."/>
            <person name="Phillips S."/>
            <person name="Plumb R.W."/>
            <person name="Porter K.M."/>
            <person name="Ramsey Y."/>
            <person name="Ranby S.A."/>
            <person name="Rice C.M."/>
            <person name="Ross M.T."/>
            <person name="Searle S.M."/>
            <person name="Sehra H.K."/>
            <person name="Sheridan E."/>
            <person name="Skuce C.D."/>
            <person name="Smith S."/>
            <person name="Smith M."/>
            <person name="Spraggon L."/>
            <person name="Squares S.L."/>
            <person name="Steward C.A."/>
            <person name="Sycamore N."/>
            <person name="Tamlyn-Hall G."/>
            <person name="Tester J."/>
            <person name="Theaker A.J."/>
            <person name="Thomas D.W."/>
            <person name="Thorpe A."/>
            <person name="Tracey A."/>
            <person name="Tromans A."/>
            <person name="Tubby B."/>
            <person name="Wall M."/>
            <person name="Wallis J.M."/>
            <person name="West A.P."/>
            <person name="White S.S."/>
            <person name="Whitehead S.L."/>
            <person name="Whittaker H."/>
            <person name="Wild A."/>
            <person name="Willey D.J."/>
            <person name="Wilmer T.E."/>
            <person name="Wood J.M."/>
            <person name="Wray P.W."/>
            <person name="Wyatt J.C."/>
            <person name="Young L."/>
            <person name="Younger R.M."/>
            <person name="Bentley D.R."/>
            <person name="Coulson A."/>
            <person name="Durbin R.M."/>
            <person name="Hubbard T."/>
            <person name="Sulston J.E."/>
            <person name="Dunham I."/>
            <person name="Rogers J."/>
            <person name="Beck S."/>
        </authorList>
    </citation>
    <scope>NUCLEOTIDE SEQUENCE [LARGE SCALE GENOMIC DNA]</scope>
</reference>
<reference key="5">
    <citation type="submission" date="2005-09" db="EMBL/GenBank/DDBJ databases">
        <authorList>
            <person name="Mural R.J."/>
            <person name="Istrail S."/>
            <person name="Sutton G.G."/>
            <person name="Florea L."/>
            <person name="Halpern A.L."/>
            <person name="Mobarry C.M."/>
            <person name="Lippert R."/>
            <person name="Walenz B."/>
            <person name="Shatkay H."/>
            <person name="Dew I."/>
            <person name="Miller J.R."/>
            <person name="Flanigan M.J."/>
            <person name="Edwards N.J."/>
            <person name="Bolanos R."/>
            <person name="Fasulo D."/>
            <person name="Halldorsson B.V."/>
            <person name="Hannenhalli S."/>
            <person name="Turner R."/>
            <person name="Yooseph S."/>
            <person name="Lu F."/>
            <person name="Nusskern D.R."/>
            <person name="Shue B.C."/>
            <person name="Zheng X.H."/>
            <person name="Zhong F."/>
            <person name="Delcher A.L."/>
            <person name="Huson D.H."/>
            <person name="Kravitz S.A."/>
            <person name="Mouchard L."/>
            <person name="Reinert K."/>
            <person name="Remington K.A."/>
            <person name="Clark A.G."/>
            <person name="Waterman M.S."/>
            <person name="Eichler E.E."/>
            <person name="Adams M.D."/>
            <person name="Hunkapiller M.W."/>
            <person name="Myers E.W."/>
            <person name="Venter J.C."/>
        </authorList>
    </citation>
    <scope>NUCLEOTIDE SEQUENCE [LARGE SCALE GENOMIC DNA]</scope>
</reference>
<reference key="6">
    <citation type="journal article" date="2004" name="Genome Res.">
        <title>The status, quality, and expansion of the NIH full-length cDNA project: the Mammalian Gene Collection (MGC).</title>
        <authorList>
            <consortium name="The MGC Project Team"/>
        </authorList>
    </citation>
    <scope>NUCLEOTIDE SEQUENCE [LARGE SCALE MRNA]</scope>
    <source>
        <tissue>Embryonic stem cell</tissue>
        <tissue>Skin</tissue>
    </source>
</reference>
<reference key="7">
    <citation type="submission" date="2008-02" db="UniProtKB">
        <authorList>
            <person name="Bienvenut W.V."/>
            <person name="Calvo F."/>
            <person name="Boldt K."/>
            <person name="von Kriegsheim A.F."/>
            <person name="Matallanas D."/>
            <person name="Cooper W.N."/>
            <person name="Kolch W."/>
        </authorList>
    </citation>
    <scope>PROTEIN SEQUENCE OF 2-33; 85-93 AND 117-129</scope>
    <scope>CLEAVAGE OF INITIATOR METHIONINE</scope>
    <scope>ACETYLATION AT ALA-2</scope>
    <scope>IDENTIFICATION BY MASS SPECTROMETRY</scope>
    <source>
        <tissue>Cervix carcinoma</tissue>
        <tissue>Hepatoma</tissue>
        <tissue>Mammary carcinoma</tissue>
    </source>
</reference>
<reference key="8">
    <citation type="journal article" date="1996" name="Eur. J. Biochem.">
        <title>Characterization of the human small-ribosomal-subunit proteins by N-terminal and internal sequencing, and mass spectrometry.</title>
        <authorList>
            <person name="Vladimirov S.N."/>
            <person name="Ivanov A.V."/>
            <person name="Karpova G.G."/>
            <person name="Musolyamov A.K."/>
            <person name="Egorov T.A."/>
            <person name="Thiede B."/>
            <person name="Wittmann-Liebold B."/>
            <person name="Otto A."/>
        </authorList>
    </citation>
    <scope>PROTEIN SEQUENCE OF 24-39</scope>
    <source>
        <tissue>Placenta</tissue>
    </source>
</reference>
<reference key="9">
    <citation type="journal article" date="1998" name="Genome Res.">
        <title>A map of 75 human ribosomal protein genes.</title>
        <authorList>
            <person name="Kenmochi N."/>
            <person name="Kawaguchi T."/>
            <person name="Rozen S."/>
            <person name="Davis E."/>
            <person name="Goodman N."/>
            <person name="Hudson T.J."/>
            <person name="Tanaka T."/>
            <person name="Page D.C."/>
        </authorList>
    </citation>
    <scope>NUCLEOTIDE SEQUENCE [GENOMIC DNA] OF 113-125</scope>
</reference>
<reference key="10">
    <citation type="journal article" date="2003" name="Nature">
        <title>Proteomic characterization of the human centrosome by protein correlation profiling.</title>
        <authorList>
            <person name="Andersen J.S."/>
            <person name="Wilkinson C.J."/>
            <person name="Mayor T."/>
            <person name="Mortensen P."/>
            <person name="Nigg E.A."/>
            <person name="Mann M."/>
        </authorList>
    </citation>
    <scope>IDENTIFICATION BY MASS SPECTROMETRY</scope>
    <source>
        <tissue>Lymphoblast</tissue>
    </source>
</reference>
<reference key="11">
    <citation type="journal article" date="2009" name="Anal. Chem.">
        <title>Lys-N and trypsin cover complementary parts of the phosphoproteome in a refined SCX-based approach.</title>
        <authorList>
            <person name="Gauci S."/>
            <person name="Helbig A.O."/>
            <person name="Slijper M."/>
            <person name="Krijgsveld J."/>
            <person name="Heck A.J."/>
            <person name="Mohammed S."/>
        </authorList>
    </citation>
    <scope>ACETYLATION [LARGE SCALE ANALYSIS] AT ALA-2</scope>
    <scope>CLEAVAGE OF INITIATOR METHIONINE [LARGE SCALE ANALYSIS]</scope>
    <scope>IDENTIFICATION BY MASS SPECTROMETRY [LARGE SCALE ANALYSIS]</scope>
</reference>
<reference key="12">
    <citation type="journal article" date="2010" name="Sci. Signal.">
        <title>Quantitative phosphoproteomics reveals widespread full phosphorylation site occupancy during mitosis.</title>
        <authorList>
            <person name="Olsen J.V."/>
            <person name="Vermeulen M."/>
            <person name="Santamaria A."/>
            <person name="Kumar C."/>
            <person name="Miller M.L."/>
            <person name="Jensen L.J."/>
            <person name="Gnad F."/>
            <person name="Cox J."/>
            <person name="Jensen T.S."/>
            <person name="Nigg E.A."/>
            <person name="Brunak S."/>
            <person name="Mann M."/>
        </authorList>
    </citation>
    <scope>ACETYLATION [LARGE SCALE ANALYSIS] AT ALA-2</scope>
    <scope>CLEAVAGE OF INITIATOR METHIONINE [LARGE SCALE ANALYSIS]</scope>
    <scope>IDENTIFICATION BY MASS SPECTROMETRY [LARGE SCALE ANALYSIS]</scope>
    <source>
        <tissue>Cervix carcinoma</tissue>
    </source>
</reference>
<reference key="13">
    <citation type="journal article" date="2011" name="BMC Syst. Biol.">
        <title>Initial characterization of the human central proteome.</title>
        <authorList>
            <person name="Burkard T.R."/>
            <person name="Planyavsky M."/>
            <person name="Kaupe I."/>
            <person name="Breitwieser F.P."/>
            <person name="Buerckstuemmer T."/>
            <person name="Bennett K.L."/>
            <person name="Superti-Furga G."/>
            <person name="Colinge J."/>
        </authorList>
    </citation>
    <scope>IDENTIFICATION BY MASS SPECTROMETRY [LARGE SCALE ANALYSIS]</scope>
</reference>
<reference key="14">
    <citation type="journal article" date="2012" name="Mol. Cell. Proteomics">
        <title>Comparative large-scale characterisation of plant vs. mammal proteins reveals similar and idiosyncratic N-alpha acetylation features.</title>
        <authorList>
            <person name="Bienvenut W.V."/>
            <person name="Sumpton D."/>
            <person name="Martinez A."/>
            <person name="Lilla S."/>
            <person name="Espagne C."/>
            <person name="Meinnel T."/>
            <person name="Giglione C."/>
        </authorList>
    </citation>
    <scope>ACETYLATION [LARGE SCALE ANALYSIS] AT ALA-2</scope>
    <scope>CLEAVAGE OF INITIATOR METHIONINE [LARGE SCALE ANALYSIS]</scope>
    <scope>IDENTIFICATION BY MASS SPECTROMETRY [LARGE SCALE ANALYSIS]</scope>
</reference>
<reference key="15">
    <citation type="journal article" date="2012" name="Proc. Natl. Acad. Sci. U.S.A.">
        <title>N-terminal acetylome analyses and functional insights of the N-terminal acetyltransferase NatB.</title>
        <authorList>
            <person name="Van Damme P."/>
            <person name="Lasa M."/>
            <person name="Polevoda B."/>
            <person name="Gazquez C."/>
            <person name="Elosegui-Artola A."/>
            <person name="Kim D.S."/>
            <person name="De Juan-Pardo E."/>
            <person name="Demeyer K."/>
            <person name="Hole K."/>
            <person name="Larrea E."/>
            <person name="Timmerman E."/>
            <person name="Prieto J."/>
            <person name="Arnesen T."/>
            <person name="Sherman F."/>
            <person name="Gevaert K."/>
            <person name="Aldabe R."/>
        </authorList>
    </citation>
    <scope>ACETYLATION [LARGE SCALE ANALYSIS] AT ALA-2</scope>
    <scope>CLEAVAGE OF INITIATOR METHIONINE [LARGE SCALE ANALYSIS]</scope>
    <scope>IDENTIFICATION BY MASS SPECTROMETRY [LARGE SCALE ANALYSIS]</scope>
</reference>
<reference key="16">
    <citation type="journal article" date="2014" name="Curr. Opin. Struct. Biol.">
        <title>A new system for naming ribosomal proteins.</title>
        <authorList>
            <person name="Ban N."/>
            <person name="Beckmann R."/>
            <person name="Cate J.H.D."/>
            <person name="Dinman J.D."/>
            <person name="Dragon F."/>
            <person name="Ellis S.R."/>
            <person name="Lafontaine D.L.J."/>
            <person name="Lindahl L."/>
            <person name="Liljas A."/>
            <person name="Lipton J.M."/>
            <person name="McAlear M.A."/>
            <person name="Moore P.B."/>
            <person name="Noller H.F."/>
            <person name="Ortega J."/>
            <person name="Panse V.G."/>
            <person name="Ramakrishnan V."/>
            <person name="Spahn C.M.T."/>
            <person name="Steitz T.A."/>
            <person name="Tchorzewski M."/>
            <person name="Tollervey D."/>
            <person name="Warren A.J."/>
            <person name="Williamson J.R."/>
            <person name="Wilson D."/>
            <person name="Yonath A."/>
            <person name="Yusupov M."/>
        </authorList>
    </citation>
    <scope>NOMENCLATURE</scope>
</reference>
<reference key="17">
    <citation type="journal article" date="2014" name="J. Proteomics">
        <title>An enzyme assisted RP-RPLC approach for in-depth analysis of human liver phosphoproteome.</title>
        <authorList>
            <person name="Bian Y."/>
            <person name="Song C."/>
            <person name="Cheng K."/>
            <person name="Dong M."/>
            <person name="Wang F."/>
            <person name="Huang J."/>
            <person name="Sun D."/>
            <person name="Wang L."/>
            <person name="Ye M."/>
            <person name="Zou H."/>
        </authorList>
    </citation>
    <scope>IDENTIFICATION BY MASS SPECTROMETRY [LARGE SCALE ANALYSIS]</scope>
    <source>
        <tissue>Liver</tissue>
    </source>
</reference>
<reference key="18">
    <citation type="journal article" date="2015" name="Proteomics">
        <title>N-terminome analysis of the human mitochondrial proteome.</title>
        <authorList>
            <person name="Vaca Jacome A.S."/>
            <person name="Rabilloud T."/>
            <person name="Schaeffer-Reiss C."/>
            <person name="Rompais M."/>
            <person name="Ayoub D."/>
            <person name="Lane L."/>
            <person name="Bairoch A."/>
            <person name="Van Dorsselaer A."/>
            <person name="Carapito C."/>
        </authorList>
    </citation>
    <scope>ACETYLATION [LARGE SCALE ANALYSIS] AT ALA-2</scope>
    <scope>CLEAVAGE OF INITIATOR METHIONINE [LARGE SCALE ANALYSIS]</scope>
    <scope>IDENTIFICATION BY MASS SPECTROMETRY [LARGE SCALE ANALYSIS]</scope>
</reference>
<reference key="19">
    <citation type="journal article" date="2013" name="Nature">
        <title>Structures of the human and Drosophila 80S ribosome.</title>
        <authorList>
            <person name="Anger A.M."/>
            <person name="Armache J.P."/>
            <person name="Berninghausen O."/>
            <person name="Habeck M."/>
            <person name="Subklewe M."/>
            <person name="Wilson D.N."/>
            <person name="Beckmann R."/>
        </authorList>
    </citation>
    <scope>STRUCTURE BY ELECTRON MICROSCOPY (5.0 ANGSTROMS)</scope>
    <scope>SUBCELLULAR LOCATION</scope>
    <scope>SUBUNIT</scope>
</reference>
<reference evidence="9 10 11" key="20">
    <citation type="journal article" date="2021" name="Science">
        <title>Nucleolar maturation of the human small subunit processome.</title>
        <authorList>
            <person name="Singh S."/>
            <person name="Vanden Broeck A."/>
            <person name="Miller L."/>
            <person name="Chaker-Margot M."/>
            <person name="Klinge S."/>
        </authorList>
    </citation>
    <scope>STRUCTURE BY ELECTRON MICROSCOPY (2.70 ANGSTROMS)</scope>
</reference>
<accession>P25398</accession>
<accession>Q76M58</accession>
<sequence length="132" mass="14515">MAEEGIAAGGVMDVNTALQEVLKTALIHDGLARGIREAAKALDKRQAHLCVLASNCDEPMYVKLVEALCAEHQINLIKVDDNKKLGEWVGLCKIDREGKPRKVVGCSCVVVKDYGKESQAKDVIEEYFKCKK</sequence>
<comment type="function">
    <text evidence="2 4">Part of the small subunit (SSU) processome, first precursor of the small eukaryotic ribosomal subunit. During the assembly of the SSU processome in the nucleolus, many ribosome biogenesis factors, an RNA chaperone and ribosomal proteins associate with the nascent pre-rRNA and work in concert to generate RNA folding, modifications, rearrangements and cleavage as well as targeted degradation of pre-ribosomal RNA by the RNA exosome (PubMed:34516797). Subunit of the 40S ribosomal complex (By similarity).</text>
</comment>
<comment type="subunit">
    <text evidence="2 3 4">Part of the small subunit (SSU) processome, composed of more than 70 proteins and the RNA chaperone small nucleolar RNA (snoRNA) U3 (PubMed:23636399, PubMed:34516797). Subunit of the 40S ribosomal complex (By similarity).</text>
</comment>
<comment type="interaction">
    <interactant intactId="EBI-354542">
        <id>P25398</id>
    </interactant>
    <interactant intactId="EBI-466029">
        <id>P42858</id>
        <label>HTT</label>
    </interactant>
    <organismsDiffer>false</organismsDiffer>
    <experiments>3</experiments>
</comment>
<comment type="interaction">
    <interactant intactId="EBI-354542">
        <id>P25398</id>
    </interactant>
    <interactant intactId="EBI-354442">
        <id>P46783</id>
        <label>RPS10</label>
    </interactant>
    <organismsDiffer>false</organismsDiffer>
    <experiments>2</experiments>
</comment>
<comment type="subcellular location">
    <subcellularLocation>
        <location evidence="3">Cytoplasm</location>
    </subcellularLocation>
    <subcellularLocation>
        <location evidence="4">Nucleus</location>
        <location evidence="4">Nucleolus</location>
    </subcellularLocation>
</comment>
<comment type="similarity">
    <text evidence="7">Belongs to the eukaryotic ribosomal protein eS12 family.</text>
</comment>
<organism>
    <name type="scientific">Homo sapiens</name>
    <name type="common">Human</name>
    <dbReference type="NCBI Taxonomy" id="9606"/>
    <lineage>
        <taxon>Eukaryota</taxon>
        <taxon>Metazoa</taxon>
        <taxon>Chordata</taxon>
        <taxon>Craniata</taxon>
        <taxon>Vertebrata</taxon>
        <taxon>Euteleostomi</taxon>
        <taxon>Mammalia</taxon>
        <taxon>Eutheria</taxon>
        <taxon>Euarchontoglires</taxon>
        <taxon>Primates</taxon>
        <taxon>Haplorrhini</taxon>
        <taxon>Catarrhini</taxon>
        <taxon>Hominidae</taxon>
        <taxon>Homo</taxon>
    </lineage>
</organism>
<name>RS12_HUMAN</name>
<dbReference type="EMBL" id="X53505">
    <property type="protein sequence ID" value="CAA37582.1"/>
    <property type="molecule type" value="mRNA"/>
</dbReference>
<dbReference type="EMBL" id="AB061840">
    <property type="protein sequence ID" value="BAB79478.1"/>
    <property type="molecule type" value="Genomic_DNA"/>
</dbReference>
<dbReference type="EMBL" id="AK311826">
    <property type="protein sequence ID" value="BAG34768.1"/>
    <property type="molecule type" value="mRNA"/>
</dbReference>
<dbReference type="EMBL" id="AL137783">
    <property type="status" value="NOT_ANNOTATED_CDS"/>
    <property type="molecule type" value="Genomic_DNA"/>
</dbReference>
<dbReference type="EMBL" id="CH471051">
    <property type="protein sequence ID" value="EAW48011.1"/>
    <property type="molecule type" value="Genomic_DNA"/>
</dbReference>
<dbReference type="EMBL" id="BC017321">
    <property type="protein sequence ID" value="AAH17321.1"/>
    <property type="molecule type" value="mRNA"/>
</dbReference>
<dbReference type="EMBL" id="BC071930">
    <property type="protein sequence ID" value="AAH71930.1"/>
    <property type="molecule type" value="mRNA"/>
</dbReference>
<dbReference type="EMBL" id="BC095424">
    <property type="protein sequence ID" value="AAH95424.1"/>
    <property type="molecule type" value="mRNA"/>
</dbReference>
<dbReference type="EMBL" id="AB007153">
    <property type="protein sequence ID" value="BAA25819.1"/>
    <property type="molecule type" value="Genomic_DNA"/>
</dbReference>
<dbReference type="CCDS" id="CCDS5164.1"/>
<dbReference type="PIR" id="S22989">
    <property type="entry name" value="R3HU12"/>
</dbReference>
<dbReference type="RefSeq" id="NP_001007.2">
    <property type="nucleotide sequence ID" value="NM_001016.3"/>
</dbReference>
<dbReference type="PDB" id="4V6X">
    <property type="method" value="EM"/>
    <property type="resolution" value="5.00 A"/>
    <property type="chains" value="AM=1-132"/>
</dbReference>
<dbReference type="PDB" id="5A2Q">
    <property type="method" value="EM"/>
    <property type="resolution" value="3.90 A"/>
    <property type="chains" value="M=1-132"/>
</dbReference>
<dbReference type="PDB" id="5AJ0">
    <property type="method" value="EM"/>
    <property type="resolution" value="3.50 A"/>
    <property type="chains" value="BM=1-132"/>
</dbReference>
<dbReference type="PDB" id="5FLX">
    <property type="method" value="EM"/>
    <property type="resolution" value="3.90 A"/>
    <property type="chains" value="M=1-132"/>
</dbReference>
<dbReference type="PDB" id="5LKS">
    <property type="method" value="EM"/>
    <property type="resolution" value="3.60 A"/>
    <property type="chains" value="SM=1-132"/>
</dbReference>
<dbReference type="PDB" id="5OA3">
    <property type="method" value="EM"/>
    <property type="resolution" value="4.30 A"/>
    <property type="chains" value="M=1-132"/>
</dbReference>
<dbReference type="PDB" id="5T2C">
    <property type="method" value="EM"/>
    <property type="resolution" value="3.60 A"/>
    <property type="chains" value="AM=1-132"/>
</dbReference>
<dbReference type="PDB" id="5VYC">
    <property type="method" value="X-ray"/>
    <property type="resolution" value="6.00 A"/>
    <property type="chains" value="M1/M2/M3/M4/M5/M6=1-132"/>
</dbReference>
<dbReference type="PDB" id="6FEC">
    <property type="method" value="EM"/>
    <property type="resolution" value="6.30 A"/>
    <property type="chains" value="r=9-132"/>
</dbReference>
<dbReference type="PDB" id="6G18">
    <property type="method" value="EM"/>
    <property type="resolution" value="3.60 A"/>
    <property type="chains" value="M=1-132"/>
</dbReference>
<dbReference type="PDB" id="6G51">
    <property type="method" value="EM"/>
    <property type="resolution" value="4.10 A"/>
    <property type="chains" value="M=1-132"/>
</dbReference>
<dbReference type="PDB" id="6G53">
    <property type="method" value="EM"/>
    <property type="resolution" value="4.50 A"/>
    <property type="chains" value="M=1-132"/>
</dbReference>
<dbReference type="PDB" id="6G5H">
    <property type="method" value="EM"/>
    <property type="resolution" value="3.60 A"/>
    <property type="chains" value="M=1-132"/>
</dbReference>
<dbReference type="PDB" id="6G5I">
    <property type="method" value="EM"/>
    <property type="resolution" value="3.50 A"/>
    <property type="chains" value="M=1-132"/>
</dbReference>
<dbReference type="PDB" id="6IP5">
    <property type="method" value="EM"/>
    <property type="resolution" value="3.90 A"/>
    <property type="chains" value="3J=1-132"/>
</dbReference>
<dbReference type="PDB" id="6IP6">
    <property type="method" value="EM"/>
    <property type="resolution" value="4.50 A"/>
    <property type="chains" value="3J=1-132"/>
</dbReference>
<dbReference type="PDB" id="6IP8">
    <property type="method" value="EM"/>
    <property type="resolution" value="3.90 A"/>
    <property type="chains" value="3J=1-132"/>
</dbReference>
<dbReference type="PDB" id="6OLE">
    <property type="method" value="EM"/>
    <property type="resolution" value="3.10 A"/>
    <property type="chains" value="SM=15-132"/>
</dbReference>
<dbReference type="PDB" id="6OLF">
    <property type="method" value="EM"/>
    <property type="resolution" value="3.90 A"/>
    <property type="chains" value="SM=15-132"/>
</dbReference>
<dbReference type="PDB" id="6OLG">
    <property type="method" value="EM"/>
    <property type="resolution" value="3.40 A"/>
    <property type="chains" value="BM=11-130"/>
</dbReference>
<dbReference type="PDB" id="6OLI">
    <property type="method" value="EM"/>
    <property type="resolution" value="3.50 A"/>
    <property type="chains" value="SM=15-132"/>
</dbReference>
<dbReference type="PDB" id="6OLZ">
    <property type="method" value="EM"/>
    <property type="resolution" value="3.90 A"/>
    <property type="chains" value="BM=11-130"/>
</dbReference>
<dbReference type="PDB" id="6OM0">
    <property type="method" value="EM"/>
    <property type="resolution" value="3.10 A"/>
    <property type="chains" value="SM=15-132"/>
</dbReference>
<dbReference type="PDB" id="6OM7">
    <property type="method" value="EM"/>
    <property type="resolution" value="3.70 A"/>
    <property type="chains" value="SM=15-132"/>
</dbReference>
<dbReference type="PDB" id="6QZP">
    <property type="method" value="EM"/>
    <property type="resolution" value="2.90 A"/>
    <property type="chains" value="SM=11-132"/>
</dbReference>
<dbReference type="PDB" id="6XA1">
    <property type="method" value="EM"/>
    <property type="resolution" value="2.80 A"/>
    <property type="chains" value="SM=13-132"/>
</dbReference>
<dbReference type="PDB" id="6Y0G">
    <property type="method" value="EM"/>
    <property type="resolution" value="3.20 A"/>
    <property type="chains" value="SM=1-132"/>
</dbReference>
<dbReference type="PDB" id="6Y57">
    <property type="method" value="EM"/>
    <property type="resolution" value="3.50 A"/>
    <property type="chains" value="Sf=1-132"/>
</dbReference>
<dbReference type="PDB" id="6YBS">
    <property type="method" value="EM"/>
    <property type="resolution" value="3.10 A"/>
    <property type="chains" value="m=1-132"/>
</dbReference>
<dbReference type="PDB" id="6Z6L">
    <property type="method" value="EM"/>
    <property type="resolution" value="3.00 A"/>
    <property type="chains" value="SM=1-132"/>
</dbReference>
<dbReference type="PDB" id="6Z6M">
    <property type="method" value="EM"/>
    <property type="resolution" value="3.10 A"/>
    <property type="chains" value="SM=1-132"/>
</dbReference>
<dbReference type="PDB" id="6Z6N">
    <property type="method" value="EM"/>
    <property type="resolution" value="2.90 A"/>
    <property type="chains" value="SM=1-132"/>
</dbReference>
<dbReference type="PDB" id="6ZLW">
    <property type="method" value="EM"/>
    <property type="resolution" value="2.60 A"/>
    <property type="chains" value="O=1-132"/>
</dbReference>
<dbReference type="PDB" id="6ZM7">
    <property type="method" value="EM"/>
    <property type="resolution" value="2.70 A"/>
    <property type="chains" value="SM=1-132"/>
</dbReference>
<dbReference type="PDB" id="6ZME">
    <property type="method" value="EM"/>
    <property type="resolution" value="3.00 A"/>
    <property type="chains" value="SM=1-132"/>
</dbReference>
<dbReference type="PDB" id="6ZMI">
    <property type="method" value="EM"/>
    <property type="resolution" value="2.60 A"/>
    <property type="chains" value="SM=1-132"/>
</dbReference>
<dbReference type="PDB" id="6ZMO">
    <property type="method" value="EM"/>
    <property type="resolution" value="3.10 A"/>
    <property type="chains" value="SM=1-132"/>
</dbReference>
<dbReference type="PDB" id="6ZMT">
    <property type="method" value="EM"/>
    <property type="resolution" value="3.00 A"/>
    <property type="chains" value="O=1-132"/>
</dbReference>
<dbReference type="PDB" id="6ZMW">
    <property type="method" value="EM"/>
    <property type="resolution" value="3.70 A"/>
    <property type="chains" value="m=1-132"/>
</dbReference>
<dbReference type="PDB" id="6ZN5">
    <property type="method" value="EM"/>
    <property type="resolution" value="3.20 A"/>
    <property type="chains" value="O=10-132"/>
</dbReference>
<dbReference type="PDB" id="6ZOJ">
    <property type="method" value="EM"/>
    <property type="resolution" value="2.80 A"/>
    <property type="chains" value="M=1-132"/>
</dbReference>
<dbReference type="PDB" id="6ZOL">
    <property type="method" value="EM"/>
    <property type="resolution" value="2.80 A"/>
    <property type="chains" value="M=1-132"/>
</dbReference>
<dbReference type="PDB" id="6ZON">
    <property type="method" value="EM"/>
    <property type="resolution" value="3.00 A"/>
    <property type="chains" value="v=1-132"/>
</dbReference>
<dbReference type="PDB" id="6ZP4">
    <property type="method" value="EM"/>
    <property type="resolution" value="2.90 A"/>
    <property type="chains" value="v=1-132"/>
</dbReference>
<dbReference type="PDB" id="6ZUO">
    <property type="method" value="EM"/>
    <property type="resolution" value="3.10 A"/>
    <property type="chains" value="M=1-132"/>
</dbReference>
<dbReference type="PDB" id="6ZV6">
    <property type="method" value="EM"/>
    <property type="resolution" value="2.90 A"/>
    <property type="chains" value="M=1-132"/>
</dbReference>
<dbReference type="PDB" id="6ZVH">
    <property type="method" value="EM"/>
    <property type="resolution" value="2.90 A"/>
    <property type="chains" value="M=11-132"/>
</dbReference>
<dbReference type="PDB" id="6ZVJ">
    <property type="method" value="EM"/>
    <property type="resolution" value="3.80 A"/>
    <property type="chains" value="v=14-129"/>
</dbReference>
<dbReference type="PDB" id="6ZXD">
    <property type="method" value="EM"/>
    <property type="resolution" value="3.20 A"/>
    <property type="chains" value="M=1-132"/>
</dbReference>
<dbReference type="PDB" id="6ZXE">
    <property type="method" value="EM"/>
    <property type="resolution" value="3.00 A"/>
    <property type="chains" value="M=1-132"/>
</dbReference>
<dbReference type="PDB" id="6ZXF">
    <property type="method" value="EM"/>
    <property type="resolution" value="3.70 A"/>
    <property type="chains" value="M=1-132"/>
</dbReference>
<dbReference type="PDB" id="6ZXG">
    <property type="method" value="EM"/>
    <property type="resolution" value="2.60 A"/>
    <property type="chains" value="M=1-132"/>
</dbReference>
<dbReference type="PDB" id="6ZXH">
    <property type="method" value="EM"/>
    <property type="resolution" value="2.70 A"/>
    <property type="chains" value="M=1-132"/>
</dbReference>
<dbReference type="PDB" id="7A09">
    <property type="method" value="EM"/>
    <property type="resolution" value="3.50 A"/>
    <property type="chains" value="v=1-132"/>
</dbReference>
<dbReference type="PDB" id="7K5I">
    <property type="method" value="EM"/>
    <property type="resolution" value="2.90 A"/>
    <property type="chains" value="M=1-132"/>
</dbReference>
<dbReference type="PDB" id="7MQ8">
    <property type="method" value="EM"/>
    <property type="resolution" value="3.60 A"/>
    <property type="chains" value="LA=1-132"/>
</dbReference>
<dbReference type="PDB" id="7MQ9">
    <property type="method" value="EM"/>
    <property type="resolution" value="3.87 A"/>
    <property type="chains" value="LA=1-132"/>
</dbReference>
<dbReference type="PDB" id="7MQA">
    <property type="method" value="EM"/>
    <property type="resolution" value="2.70 A"/>
    <property type="chains" value="LA=1-132"/>
</dbReference>
<dbReference type="PDB" id="7QP6">
    <property type="method" value="EM"/>
    <property type="resolution" value="4.70 A"/>
    <property type="chains" value="m=1-132"/>
</dbReference>
<dbReference type="PDB" id="7QP7">
    <property type="method" value="EM"/>
    <property type="resolution" value="3.70 A"/>
    <property type="chains" value="m=1-132"/>
</dbReference>
<dbReference type="PDB" id="7R4X">
    <property type="method" value="EM"/>
    <property type="resolution" value="2.15 A"/>
    <property type="chains" value="M=1-132"/>
</dbReference>
<dbReference type="PDB" id="7TQL">
    <property type="method" value="EM"/>
    <property type="resolution" value="3.40 A"/>
    <property type="chains" value="O=10-129"/>
</dbReference>
<dbReference type="PDB" id="7WTT">
    <property type="method" value="EM"/>
    <property type="resolution" value="3.10 A"/>
    <property type="chains" value="M=1-132"/>
</dbReference>
<dbReference type="PDB" id="7WTU">
    <property type="method" value="EM"/>
    <property type="resolution" value="3.00 A"/>
    <property type="chains" value="M=1-132"/>
</dbReference>
<dbReference type="PDB" id="7WTV">
    <property type="method" value="EM"/>
    <property type="resolution" value="3.50 A"/>
    <property type="chains" value="M=1-132"/>
</dbReference>
<dbReference type="PDB" id="7WTW">
    <property type="method" value="EM"/>
    <property type="resolution" value="3.20 A"/>
    <property type="chains" value="M=1-132"/>
</dbReference>
<dbReference type="PDB" id="7WTX">
    <property type="method" value="EM"/>
    <property type="resolution" value="3.10 A"/>
    <property type="chains" value="M=1-132"/>
</dbReference>
<dbReference type="PDB" id="7WTZ">
    <property type="method" value="EM"/>
    <property type="resolution" value="3.00 A"/>
    <property type="chains" value="M=1-132"/>
</dbReference>
<dbReference type="PDB" id="7WU0">
    <property type="method" value="EM"/>
    <property type="resolution" value="3.30 A"/>
    <property type="chains" value="M=1-132"/>
</dbReference>
<dbReference type="PDB" id="7XNX">
    <property type="method" value="EM"/>
    <property type="resolution" value="2.70 A"/>
    <property type="chains" value="SM=1-132"/>
</dbReference>
<dbReference type="PDB" id="7XNY">
    <property type="method" value="EM"/>
    <property type="resolution" value="2.50 A"/>
    <property type="chains" value="SM=1-132"/>
</dbReference>
<dbReference type="PDB" id="8G5Y">
    <property type="method" value="EM"/>
    <property type="resolution" value="2.29 A"/>
    <property type="chains" value="SM=1-132"/>
</dbReference>
<dbReference type="PDB" id="8G60">
    <property type="method" value="EM"/>
    <property type="resolution" value="2.54 A"/>
    <property type="chains" value="SM=1-132"/>
</dbReference>
<dbReference type="PDB" id="8G61">
    <property type="method" value="EM"/>
    <property type="resolution" value="2.94 A"/>
    <property type="chains" value="SM=1-132"/>
</dbReference>
<dbReference type="PDB" id="8G6J">
    <property type="method" value="EM"/>
    <property type="resolution" value="2.80 A"/>
    <property type="chains" value="SM=1-132"/>
</dbReference>
<dbReference type="PDB" id="8GLP">
    <property type="method" value="EM"/>
    <property type="resolution" value="1.67 A"/>
    <property type="chains" value="SM=1-132"/>
</dbReference>
<dbReference type="PDB" id="8IFD">
    <property type="method" value="EM"/>
    <property type="resolution" value="2.59 A"/>
    <property type="chains" value="3J=1-132"/>
</dbReference>
<dbReference type="PDB" id="8IFE">
    <property type="method" value="EM"/>
    <property type="resolution" value="2.57 A"/>
    <property type="chains" value="3J=1-132"/>
</dbReference>
<dbReference type="PDB" id="8K2C">
    <property type="method" value="EM"/>
    <property type="resolution" value="2.40 A"/>
    <property type="chains" value="SM=1-132"/>
</dbReference>
<dbReference type="PDB" id="8OZ0">
    <property type="method" value="EM"/>
    <property type="resolution" value="3.50 A"/>
    <property type="chains" value="q=1-132"/>
</dbReference>
<dbReference type="PDB" id="8PJ1">
    <property type="method" value="EM"/>
    <property type="resolution" value="3.40 A"/>
    <property type="chains" value="m=1-132"/>
</dbReference>
<dbReference type="PDB" id="8PJ2">
    <property type="method" value="EM"/>
    <property type="resolution" value="3.40 A"/>
    <property type="chains" value="m=1-132"/>
</dbReference>
<dbReference type="PDB" id="8PJ3">
    <property type="method" value="EM"/>
    <property type="resolution" value="3.70 A"/>
    <property type="chains" value="m=1-132"/>
</dbReference>
<dbReference type="PDB" id="8PJ4">
    <property type="method" value="EM"/>
    <property type="resolution" value="3.20 A"/>
    <property type="chains" value="m=1-132"/>
</dbReference>
<dbReference type="PDB" id="8PJ5">
    <property type="method" value="EM"/>
    <property type="resolution" value="2.90 A"/>
    <property type="chains" value="m=1-132"/>
</dbReference>
<dbReference type="PDB" id="8PJ6">
    <property type="method" value="EM"/>
    <property type="resolution" value="2.90 A"/>
    <property type="chains" value="m=1-132"/>
</dbReference>
<dbReference type="PDB" id="8PPK">
    <property type="method" value="EM"/>
    <property type="resolution" value="2.98 A"/>
    <property type="chains" value="M=1-132"/>
</dbReference>
<dbReference type="PDB" id="8PPL">
    <property type="method" value="EM"/>
    <property type="resolution" value="2.65 A"/>
    <property type="chains" value="AM=1-132"/>
</dbReference>
<dbReference type="PDB" id="8QOI">
    <property type="method" value="EM"/>
    <property type="resolution" value="1.90 A"/>
    <property type="chains" value="SM=1-132"/>
</dbReference>
<dbReference type="PDB" id="8T4S">
    <property type="method" value="EM"/>
    <property type="resolution" value="2.60 A"/>
    <property type="chains" value="M=1-132"/>
</dbReference>
<dbReference type="PDB" id="8UKB">
    <property type="method" value="EM"/>
    <property type="resolution" value="3.05 A"/>
    <property type="chains" value="SM=11-132"/>
</dbReference>
<dbReference type="PDB" id="8XP2">
    <property type="method" value="EM"/>
    <property type="resolution" value="3.20 A"/>
    <property type="chains" value="SM=1-132"/>
</dbReference>
<dbReference type="PDB" id="8XP3">
    <property type="method" value="EM"/>
    <property type="resolution" value="3.40 A"/>
    <property type="chains" value="SM=1-132"/>
</dbReference>
<dbReference type="PDB" id="8XSX">
    <property type="method" value="EM"/>
    <property type="resolution" value="2.40 A"/>
    <property type="chains" value="SM=1-132"/>
</dbReference>
<dbReference type="PDB" id="8XSY">
    <property type="method" value="EM"/>
    <property type="resolution" value="3.00 A"/>
    <property type="chains" value="SM=1-132"/>
</dbReference>
<dbReference type="PDB" id="8XSZ">
    <property type="method" value="EM"/>
    <property type="resolution" value="3.20 A"/>
    <property type="chains" value="SM=1-132"/>
</dbReference>
<dbReference type="PDB" id="8XXL">
    <property type="method" value="EM"/>
    <property type="resolution" value="2.90 A"/>
    <property type="chains" value="SM=1-132"/>
</dbReference>
<dbReference type="PDB" id="8XXM">
    <property type="method" value="EM"/>
    <property type="resolution" value="3.20 A"/>
    <property type="chains" value="SM=1-132"/>
</dbReference>
<dbReference type="PDB" id="8XXN">
    <property type="method" value="EM"/>
    <property type="resolution" value="3.60 A"/>
    <property type="chains" value="SM=1-132"/>
</dbReference>
<dbReference type="PDB" id="8YOO">
    <property type="method" value="EM"/>
    <property type="resolution" value="2.00 A"/>
    <property type="chains" value="SM=1-132"/>
</dbReference>
<dbReference type="PDB" id="8YOP">
    <property type="method" value="EM"/>
    <property type="resolution" value="2.20 A"/>
    <property type="chains" value="SM=1-132"/>
</dbReference>
<dbReference type="PDB" id="8ZDB">
    <property type="method" value="EM"/>
    <property type="resolution" value="3.60 A"/>
    <property type="chains" value="M=1-132"/>
</dbReference>
<dbReference type="PDB" id="8ZDC">
    <property type="method" value="EM"/>
    <property type="resolution" value="3.80 A"/>
    <property type="chains" value="M=1-132"/>
</dbReference>
<dbReference type="PDB" id="8ZDD">
    <property type="method" value="EM"/>
    <property type="resolution" value="3.70 A"/>
    <property type="chains" value="M=1-132"/>
</dbReference>
<dbReference type="PDB" id="9BKD">
    <property type="method" value="EM"/>
    <property type="resolution" value="2.60 A"/>
    <property type="chains" value="m=1-132"/>
</dbReference>
<dbReference type="PDB" id="9BLN">
    <property type="method" value="EM"/>
    <property type="resolution" value="3.90 A"/>
    <property type="chains" value="m=1-132"/>
</dbReference>
<dbReference type="PDB" id="9C3H">
    <property type="method" value="EM"/>
    <property type="resolution" value="2.00 A"/>
    <property type="chains" value="Sy=1-132"/>
</dbReference>
<dbReference type="PDB" id="9G8M">
    <property type="method" value="EM"/>
    <property type="resolution" value="3.30 A"/>
    <property type="chains" value="SM=1-132"/>
</dbReference>
<dbReference type="PDB" id="9G8O">
    <property type="method" value="EM"/>
    <property type="resolution" value="3.40 A"/>
    <property type="chains" value="SM=1-132"/>
</dbReference>
<dbReference type="PDBsum" id="4V6X"/>
<dbReference type="PDBsum" id="5A2Q"/>
<dbReference type="PDBsum" id="5AJ0"/>
<dbReference type="PDBsum" id="5FLX"/>
<dbReference type="PDBsum" id="5LKS"/>
<dbReference type="PDBsum" id="5OA3"/>
<dbReference type="PDBsum" id="5T2C"/>
<dbReference type="PDBsum" id="5VYC"/>
<dbReference type="PDBsum" id="6FEC"/>
<dbReference type="PDBsum" id="6G18"/>
<dbReference type="PDBsum" id="6G51"/>
<dbReference type="PDBsum" id="6G53"/>
<dbReference type="PDBsum" id="6G5H"/>
<dbReference type="PDBsum" id="6G5I"/>
<dbReference type="PDBsum" id="6IP5"/>
<dbReference type="PDBsum" id="6IP6"/>
<dbReference type="PDBsum" id="6IP8"/>
<dbReference type="PDBsum" id="6OLE"/>
<dbReference type="PDBsum" id="6OLF"/>
<dbReference type="PDBsum" id="6OLG"/>
<dbReference type="PDBsum" id="6OLI"/>
<dbReference type="PDBsum" id="6OLZ"/>
<dbReference type="PDBsum" id="6OM0"/>
<dbReference type="PDBsum" id="6OM7"/>
<dbReference type="PDBsum" id="6QZP"/>
<dbReference type="PDBsum" id="6XA1"/>
<dbReference type="PDBsum" id="6Y0G"/>
<dbReference type="PDBsum" id="6Y57"/>
<dbReference type="PDBsum" id="6YBS"/>
<dbReference type="PDBsum" id="6Z6L"/>
<dbReference type="PDBsum" id="6Z6M"/>
<dbReference type="PDBsum" id="6Z6N"/>
<dbReference type="PDBsum" id="6ZLW"/>
<dbReference type="PDBsum" id="6ZM7"/>
<dbReference type="PDBsum" id="6ZME"/>
<dbReference type="PDBsum" id="6ZMI"/>
<dbReference type="PDBsum" id="6ZMO"/>
<dbReference type="PDBsum" id="6ZMT"/>
<dbReference type="PDBsum" id="6ZMW"/>
<dbReference type="PDBsum" id="6ZN5"/>
<dbReference type="PDBsum" id="6ZOJ"/>
<dbReference type="PDBsum" id="6ZOL"/>
<dbReference type="PDBsum" id="6ZON"/>
<dbReference type="PDBsum" id="6ZP4"/>
<dbReference type="PDBsum" id="6ZUO"/>
<dbReference type="PDBsum" id="6ZV6"/>
<dbReference type="PDBsum" id="6ZVH"/>
<dbReference type="PDBsum" id="6ZVJ"/>
<dbReference type="PDBsum" id="6ZXD"/>
<dbReference type="PDBsum" id="6ZXE"/>
<dbReference type="PDBsum" id="6ZXF"/>
<dbReference type="PDBsum" id="6ZXG"/>
<dbReference type="PDBsum" id="6ZXH"/>
<dbReference type="PDBsum" id="7A09"/>
<dbReference type="PDBsum" id="7K5I"/>
<dbReference type="PDBsum" id="7MQ8"/>
<dbReference type="PDBsum" id="7MQ9"/>
<dbReference type="PDBsum" id="7MQA"/>
<dbReference type="PDBsum" id="7QP6"/>
<dbReference type="PDBsum" id="7QP7"/>
<dbReference type="PDBsum" id="7R4X"/>
<dbReference type="PDBsum" id="7TQL"/>
<dbReference type="PDBsum" id="7WTT"/>
<dbReference type="PDBsum" id="7WTU"/>
<dbReference type="PDBsum" id="7WTV"/>
<dbReference type="PDBsum" id="7WTW"/>
<dbReference type="PDBsum" id="7WTX"/>
<dbReference type="PDBsum" id="7WTZ"/>
<dbReference type="PDBsum" id="7WU0"/>
<dbReference type="PDBsum" id="7XNX"/>
<dbReference type="PDBsum" id="7XNY"/>
<dbReference type="PDBsum" id="8G5Y"/>
<dbReference type="PDBsum" id="8G60"/>
<dbReference type="PDBsum" id="8G61"/>
<dbReference type="PDBsum" id="8G6J"/>
<dbReference type="PDBsum" id="8GLP"/>
<dbReference type="PDBsum" id="8IFD"/>
<dbReference type="PDBsum" id="8IFE"/>
<dbReference type="PDBsum" id="8K2C"/>
<dbReference type="PDBsum" id="8OZ0"/>
<dbReference type="PDBsum" id="8PJ1"/>
<dbReference type="PDBsum" id="8PJ2"/>
<dbReference type="PDBsum" id="8PJ3"/>
<dbReference type="PDBsum" id="8PJ4"/>
<dbReference type="PDBsum" id="8PJ5"/>
<dbReference type="PDBsum" id="8PJ6"/>
<dbReference type="PDBsum" id="8PPK"/>
<dbReference type="PDBsum" id="8PPL"/>
<dbReference type="PDBsum" id="8QOI"/>
<dbReference type="PDBsum" id="8T4S"/>
<dbReference type="PDBsum" id="8UKB"/>
<dbReference type="PDBsum" id="8XP2"/>
<dbReference type="PDBsum" id="8XP3"/>
<dbReference type="PDBsum" id="8XSX"/>
<dbReference type="PDBsum" id="8XSY"/>
<dbReference type="PDBsum" id="8XSZ"/>
<dbReference type="PDBsum" id="8XXL"/>
<dbReference type="PDBsum" id="8XXM"/>
<dbReference type="PDBsum" id="8XXN"/>
<dbReference type="PDBsum" id="8YOO"/>
<dbReference type="PDBsum" id="8YOP"/>
<dbReference type="PDBsum" id="8ZDB"/>
<dbReference type="PDBsum" id="8ZDC"/>
<dbReference type="PDBsum" id="8ZDD"/>
<dbReference type="PDBsum" id="9BKD"/>
<dbReference type="PDBsum" id="9BLN"/>
<dbReference type="PDBsum" id="9C3H"/>
<dbReference type="PDBsum" id="9G8M"/>
<dbReference type="PDBsum" id="9G8O"/>
<dbReference type="EMDB" id="EMD-10668"/>
<dbReference type="EMDB" id="EMD-10690"/>
<dbReference type="EMDB" id="EMD-10772"/>
<dbReference type="EMDB" id="EMD-11098"/>
<dbReference type="EMDB" id="EMD-11099"/>
<dbReference type="EMDB" id="EMD-11100"/>
<dbReference type="EMDB" id="EMD-11276"/>
<dbReference type="EMDB" id="EMD-11288"/>
<dbReference type="EMDB" id="EMD-11289"/>
<dbReference type="EMDB" id="EMD-11292"/>
<dbReference type="EMDB" id="EMD-11299"/>
<dbReference type="EMDB" id="EMD-11301"/>
<dbReference type="EMDB" id="EMD-11302"/>
<dbReference type="EMDB" id="EMD-11310"/>
<dbReference type="EMDB" id="EMD-11320"/>
<dbReference type="EMDB" id="EMD-11322"/>
<dbReference type="EMDB" id="EMD-11325"/>
<dbReference type="EMDB" id="EMD-11335"/>
<dbReference type="EMDB" id="EMD-11440"/>
<dbReference type="EMDB" id="EMD-11441"/>
<dbReference type="EMDB" id="EMD-11456"/>
<dbReference type="EMDB" id="EMD-11458"/>
<dbReference type="EMDB" id="EMD-11517"/>
<dbReference type="EMDB" id="EMD-11518"/>
<dbReference type="EMDB" id="EMD-11519"/>
<dbReference type="EMDB" id="EMD-11520"/>
<dbReference type="EMDB" id="EMD-11521"/>
<dbReference type="EMDB" id="EMD-11602"/>
<dbReference type="EMDB" id="EMD-14113"/>
<dbReference type="EMDB" id="EMD-14114"/>
<dbReference type="EMDB" id="EMD-14317"/>
<dbReference type="EMDB" id="EMD-17297"/>
<dbReference type="EMDB" id="EMD-17696"/>
<dbReference type="EMDB" id="EMD-17697"/>
<dbReference type="EMDB" id="EMD-17698"/>
<dbReference type="EMDB" id="EMD-17699"/>
<dbReference type="EMDB" id="EMD-17700"/>
<dbReference type="EMDB" id="EMD-17701"/>
<dbReference type="EMDB" id="EMD-17804"/>
<dbReference type="EMDB" id="EMD-17805"/>
<dbReference type="EMDB" id="EMD-18539"/>
<dbReference type="EMDB" id="EMD-22681"/>
<dbReference type="EMDB" id="EMD-23936"/>
<dbReference type="EMDB" id="EMD-23937"/>
<dbReference type="EMDB" id="EMD-23938"/>
<dbReference type="EMDB" id="EMD-26067"/>
<dbReference type="EMDB" id="EMD-29757"/>
<dbReference type="EMDB" id="EMD-29758"/>
<dbReference type="EMDB" id="EMD-29759"/>
<dbReference type="EMDB" id="EMD-29760"/>
<dbReference type="EMDB" id="EMD-29771"/>
<dbReference type="EMDB" id="EMD-32800"/>
<dbReference type="EMDB" id="EMD-32801"/>
<dbReference type="EMDB" id="EMD-32802"/>
<dbReference type="EMDB" id="EMD-32803"/>
<dbReference type="EMDB" id="EMD-32804"/>
<dbReference type="EMDB" id="EMD-32806"/>
<dbReference type="EMDB" id="EMD-32807"/>
<dbReference type="EMDB" id="EMD-33329"/>
<dbReference type="EMDB" id="EMD-33330"/>
<dbReference type="EMDB" id="EMD-35413"/>
<dbReference type="EMDB" id="EMD-35414"/>
<dbReference type="EMDB" id="EMD-36838"/>
<dbReference type="EMDB" id="EMD-3770"/>
<dbReference type="EMDB" id="EMD-38548"/>
<dbReference type="EMDB" id="EMD-38549"/>
<dbReference type="EMDB" id="EMD-38629"/>
<dbReference type="EMDB" id="EMD-38630"/>
<dbReference type="EMDB" id="EMD-38631"/>
<dbReference type="EMDB" id="EMD-38752"/>
<dbReference type="EMDB" id="EMD-38753"/>
<dbReference type="EMDB" id="EMD-38754"/>
<dbReference type="EMDB" id="EMD-3883"/>
<dbReference type="EMDB" id="EMD-39455"/>
<dbReference type="EMDB" id="EMD-39456"/>
<dbReference type="EMDB" id="EMD-39956"/>
<dbReference type="EMDB" id="EMD-39957"/>
<dbReference type="EMDB" id="EMD-39958"/>
<dbReference type="EMDB" id="EMD-40205"/>
<dbReference type="EMDB" id="EMD-4070"/>
<dbReference type="EMDB" id="EMD-41039"/>
<dbReference type="EMDB" id="EMD-42351"/>
<dbReference type="EMDB" id="EMD-4242"/>
<dbReference type="EMDB" id="EMD-4337"/>
<dbReference type="EMDB" id="EMD-4350"/>
<dbReference type="EMDB" id="EMD-4351"/>
<dbReference type="EMDB" id="EMD-4352"/>
<dbReference type="EMDB" id="EMD-4353"/>
<dbReference type="EMDB" id="EMD-44641"/>
<dbReference type="EMDB" id="EMD-44671"/>
<dbReference type="EMDB" id="EMD-45170"/>
<dbReference type="EMDB" id="EMD-51132"/>
<dbReference type="EMDB" id="EMD-51134"/>
<dbReference type="EMDB" id="EMD-9701"/>
<dbReference type="EMDB" id="EMD-9702"/>
<dbReference type="EMDB" id="EMD-9703"/>
<dbReference type="SMR" id="P25398"/>
<dbReference type="BioGRID" id="112120">
    <property type="interactions" value="344"/>
</dbReference>
<dbReference type="ComplexPortal" id="CPX-5223">
    <property type="entry name" value="40S cytosolic small ribosomal subunit"/>
</dbReference>
<dbReference type="CORUM" id="P25398"/>
<dbReference type="FunCoup" id="P25398">
    <property type="interactions" value="2737"/>
</dbReference>
<dbReference type="IntAct" id="P25398">
    <property type="interactions" value="109"/>
</dbReference>
<dbReference type="MINT" id="P25398"/>
<dbReference type="STRING" id="9606.ENSP00000230050"/>
<dbReference type="GlyGen" id="P25398">
    <property type="glycosylation" value="1 site, 1 O-linked glycan (1 site)"/>
</dbReference>
<dbReference type="iPTMnet" id="P25398"/>
<dbReference type="MetOSite" id="P25398"/>
<dbReference type="PhosphoSitePlus" id="P25398"/>
<dbReference type="SwissPalm" id="P25398"/>
<dbReference type="BioMuta" id="RPS12"/>
<dbReference type="DMDM" id="224471878"/>
<dbReference type="jPOST" id="P25398"/>
<dbReference type="MassIVE" id="P25398"/>
<dbReference type="PaxDb" id="9606-ENSP00000230050"/>
<dbReference type="PeptideAtlas" id="P25398"/>
<dbReference type="ProteomicsDB" id="54270"/>
<dbReference type="Pumba" id="P25398"/>
<dbReference type="TopDownProteomics" id="P25398"/>
<dbReference type="Antibodypedia" id="1252">
    <property type="antibodies" value="275 antibodies from 29 providers"/>
</dbReference>
<dbReference type="DNASU" id="6206"/>
<dbReference type="Ensembl" id="ENST00000230050.4">
    <property type="protein sequence ID" value="ENSP00000230050.3"/>
    <property type="gene ID" value="ENSG00000112306.8"/>
</dbReference>
<dbReference type="GeneID" id="6206"/>
<dbReference type="KEGG" id="hsa:6206"/>
<dbReference type="MANE-Select" id="ENST00000230050.4">
    <property type="protein sequence ID" value="ENSP00000230050.3"/>
    <property type="RefSeq nucleotide sequence ID" value="NM_001016.4"/>
    <property type="RefSeq protein sequence ID" value="NP_001007.2"/>
</dbReference>
<dbReference type="UCSC" id="uc003qdx.4">
    <property type="organism name" value="human"/>
</dbReference>
<dbReference type="AGR" id="HGNC:10385"/>
<dbReference type="CTD" id="6206"/>
<dbReference type="DisGeNET" id="6206"/>
<dbReference type="GeneCards" id="RPS12"/>
<dbReference type="HGNC" id="HGNC:10385">
    <property type="gene designation" value="RPS12"/>
</dbReference>
<dbReference type="HPA" id="ENSG00000112306">
    <property type="expression patterns" value="Low tissue specificity"/>
</dbReference>
<dbReference type="MIM" id="603660">
    <property type="type" value="gene"/>
</dbReference>
<dbReference type="neXtProt" id="NX_P25398"/>
<dbReference type="OpenTargets" id="ENSG00000112306"/>
<dbReference type="PharmGKB" id="PA34784"/>
<dbReference type="VEuPathDB" id="HostDB:ENSG00000112306"/>
<dbReference type="eggNOG" id="KOG3406">
    <property type="taxonomic scope" value="Eukaryota"/>
</dbReference>
<dbReference type="GeneTree" id="ENSGT00390000018318"/>
<dbReference type="HOGENOM" id="CLU_110343_1_1_1"/>
<dbReference type="InParanoid" id="P25398"/>
<dbReference type="OMA" id="CAEHQIP"/>
<dbReference type="OrthoDB" id="10249311at2759"/>
<dbReference type="PAN-GO" id="P25398">
    <property type="GO annotations" value="2 GO annotations based on evolutionary models"/>
</dbReference>
<dbReference type="PhylomeDB" id="P25398"/>
<dbReference type="TreeFam" id="TF300196"/>
<dbReference type="PathwayCommons" id="P25398"/>
<dbReference type="Reactome" id="R-HSA-156827">
    <property type="pathway name" value="L13a-mediated translational silencing of Ceruloplasmin expression"/>
</dbReference>
<dbReference type="Reactome" id="R-HSA-156902">
    <property type="pathway name" value="Peptide chain elongation"/>
</dbReference>
<dbReference type="Reactome" id="R-HSA-1799339">
    <property type="pathway name" value="SRP-dependent cotranslational protein targeting to membrane"/>
</dbReference>
<dbReference type="Reactome" id="R-HSA-192823">
    <property type="pathway name" value="Viral mRNA Translation"/>
</dbReference>
<dbReference type="Reactome" id="R-HSA-2408557">
    <property type="pathway name" value="Selenocysteine synthesis"/>
</dbReference>
<dbReference type="Reactome" id="R-HSA-6791226">
    <property type="pathway name" value="Major pathway of rRNA processing in the nucleolus and cytosol"/>
</dbReference>
<dbReference type="Reactome" id="R-HSA-72649">
    <property type="pathway name" value="Translation initiation complex formation"/>
</dbReference>
<dbReference type="Reactome" id="R-HSA-72689">
    <property type="pathway name" value="Formation of a pool of free 40S subunits"/>
</dbReference>
<dbReference type="Reactome" id="R-HSA-72695">
    <property type="pathway name" value="Formation of the ternary complex, and subsequently, the 43S complex"/>
</dbReference>
<dbReference type="Reactome" id="R-HSA-72702">
    <property type="pathway name" value="Ribosomal scanning and start codon recognition"/>
</dbReference>
<dbReference type="Reactome" id="R-HSA-72706">
    <property type="pathway name" value="GTP hydrolysis and joining of the 60S ribosomal subunit"/>
</dbReference>
<dbReference type="Reactome" id="R-HSA-72764">
    <property type="pathway name" value="Eukaryotic Translation Termination"/>
</dbReference>
<dbReference type="Reactome" id="R-HSA-9010553">
    <property type="pathway name" value="Regulation of expression of SLITs and ROBOs"/>
</dbReference>
<dbReference type="Reactome" id="R-HSA-9633012">
    <property type="pathway name" value="Response of EIF2AK4 (GCN2) to amino acid deficiency"/>
</dbReference>
<dbReference type="Reactome" id="R-HSA-9735869">
    <property type="pathway name" value="SARS-CoV-1 modulates host translation machinery"/>
</dbReference>
<dbReference type="Reactome" id="R-HSA-9754678">
    <property type="pathway name" value="SARS-CoV-2 modulates host translation machinery"/>
</dbReference>
<dbReference type="Reactome" id="R-HSA-975956">
    <property type="pathway name" value="Nonsense Mediated Decay (NMD) independent of the Exon Junction Complex (EJC)"/>
</dbReference>
<dbReference type="Reactome" id="R-HSA-975957">
    <property type="pathway name" value="Nonsense Mediated Decay (NMD) enhanced by the Exon Junction Complex (EJC)"/>
</dbReference>
<dbReference type="SignaLink" id="P25398"/>
<dbReference type="SIGNOR" id="P25398"/>
<dbReference type="BioGRID-ORCS" id="6206">
    <property type="hits" value="803 hits in 1151 CRISPR screens"/>
</dbReference>
<dbReference type="CD-CODE" id="232F8A39">
    <property type="entry name" value="P-body"/>
</dbReference>
<dbReference type="CD-CODE" id="91857CE7">
    <property type="entry name" value="Nucleolus"/>
</dbReference>
<dbReference type="ChiTaRS" id="RPS12">
    <property type="organism name" value="human"/>
</dbReference>
<dbReference type="EvolutionaryTrace" id="P25398"/>
<dbReference type="GeneWiki" id="RPS12"/>
<dbReference type="GenomeRNAi" id="6206"/>
<dbReference type="Pharos" id="P25398">
    <property type="development level" value="Tbio"/>
</dbReference>
<dbReference type="PRO" id="PR:P25398"/>
<dbReference type="Proteomes" id="UP000005640">
    <property type="component" value="Chromosome 6"/>
</dbReference>
<dbReference type="RNAct" id="P25398">
    <property type="molecule type" value="protein"/>
</dbReference>
<dbReference type="Bgee" id="ENSG00000112306">
    <property type="expression patterns" value="Expressed in left ovary and 107 other cell types or tissues"/>
</dbReference>
<dbReference type="GO" id="GO:0005737">
    <property type="term" value="C:cytoplasm"/>
    <property type="evidence" value="ECO:0000303"/>
    <property type="project" value="ComplexPortal"/>
</dbReference>
<dbReference type="GO" id="GO:0005829">
    <property type="term" value="C:cytosol"/>
    <property type="evidence" value="ECO:0000314"/>
    <property type="project" value="HPA"/>
</dbReference>
<dbReference type="GO" id="GO:0022626">
    <property type="term" value="C:cytosolic ribosome"/>
    <property type="evidence" value="ECO:0000314"/>
    <property type="project" value="FlyBase"/>
</dbReference>
<dbReference type="GO" id="GO:0022627">
    <property type="term" value="C:cytosolic small ribosomal subunit"/>
    <property type="evidence" value="ECO:0000314"/>
    <property type="project" value="UniProtKB"/>
</dbReference>
<dbReference type="GO" id="GO:0005794">
    <property type="term" value="C:Golgi apparatus"/>
    <property type="evidence" value="ECO:0000314"/>
    <property type="project" value="HPA"/>
</dbReference>
<dbReference type="GO" id="GO:0043231">
    <property type="term" value="C:intracellular membrane-bounded organelle"/>
    <property type="evidence" value="ECO:0000314"/>
    <property type="project" value="HPA"/>
</dbReference>
<dbReference type="GO" id="GO:0016020">
    <property type="term" value="C:membrane"/>
    <property type="evidence" value="ECO:0007005"/>
    <property type="project" value="UniProtKB"/>
</dbReference>
<dbReference type="GO" id="GO:0005730">
    <property type="term" value="C:nucleolus"/>
    <property type="evidence" value="ECO:0007669"/>
    <property type="project" value="UniProtKB-SubCell"/>
</dbReference>
<dbReference type="GO" id="GO:0005654">
    <property type="term" value="C:nucleoplasm"/>
    <property type="evidence" value="ECO:0000304"/>
    <property type="project" value="Reactome"/>
</dbReference>
<dbReference type="GO" id="GO:0032040">
    <property type="term" value="C:small-subunit processome"/>
    <property type="evidence" value="ECO:0000314"/>
    <property type="project" value="UniProtKB"/>
</dbReference>
<dbReference type="GO" id="GO:0003723">
    <property type="term" value="F:RNA binding"/>
    <property type="evidence" value="ECO:0007005"/>
    <property type="project" value="UniProtKB"/>
</dbReference>
<dbReference type="GO" id="GO:0003735">
    <property type="term" value="F:structural constituent of ribosome"/>
    <property type="evidence" value="ECO:0000314"/>
    <property type="project" value="FlyBase"/>
</dbReference>
<dbReference type="GO" id="GO:0002181">
    <property type="term" value="P:cytoplasmic translation"/>
    <property type="evidence" value="ECO:0000303"/>
    <property type="project" value="ComplexPortal"/>
</dbReference>
<dbReference type="GO" id="GO:1990145">
    <property type="term" value="P:maintenance of translational fidelity"/>
    <property type="evidence" value="ECO:0000318"/>
    <property type="project" value="GO_Central"/>
</dbReference>
<dbReference type="GO" id="GO:0090263">
    <property type="term" value="P:positive regulation of canonical Wnt signaling pathway"/>
    <property type="evidence" value="ECO:0000316"/>
    <property type="project" value="FlyBase"/>
</dbReference>
<dbReference type="GO" id="GO:0042274">
    <property type="term" value="P:ribosomal small subunit biogenesis"/>
    <property type="evidence" value="ECO:0000314"/>
    <property type="project" value="UniProtKB"/>
</dbReference>
<dbReference type="GO" id="GO:0006412">
    <property type="term" value="P:translation"/>
    <property type="evidence" value="ECO:0000303"/>
    <property type="project" value="UniProtKB"/>
</dbReference>
<dbReference type="FunFam" id="3.30.1330.30:FF:000011">
    <property type="entry name" value="40S ribosomal protein S12"/>
    <property type="match status" value="1"/>
</dbReference>
<dbReference type="Gene3D" id="3.30.1330.30">
    <property type="match status" value="1"/>
</dbReference>
<dbReference type="InterPro" id="IPR029064">
    <property type="entry name" value="Ribosomal_eL30-like_sf"/>
</dbReference>
<dbReference type="InterPro" id="IPR004038">
    <property type="entry name" value="Ribosomal_eL8/eL30/eS12/Gad45"/>
</dbReference>
<dbReference type="InterPro" id="IPR000530">
    <property type="entry name" value="Ribosomal_eS12"/>
</dbReference>
<dbReference type="InterPro" id="IPR047860">
    <property type="entry name" value="Ribosomal_eS12_CS"/>
</dbReference>
<dbReference type="PANTHER" id="PTHR11843">
    <property type="entry name" value="40S RIBOSOMAL PROTEIN S12"/>
    <property type="match status" value="1"/>
</dbReference>
<dbReference type="Pfam" id="PF01248">
    <property type="entry name" value="Ribosomal_L7Ae"/>
    <property type="match status" value="1"/>
</dbReference>
<dbReference type="PRINTS" id="PR00972">
    <property type="entry name" value="RIBSOMALS12E"/>
</dbReference>
<dbReference type="SUPFAM" id="SSF55315">
    <property type="entry name" value="L30e-like"/>
    <property type="match status" value="1"/>
</dbReference>
<dbReference type="PROSITE" id="PS01189">
    <property type="entry name" value="RIBOSOMAL_S12E"/>
    <property type="match status" value="1"/>
</dbReference>
<proteinExistence type="evidence at protein level"/>
<protein>
    <recommendedName>
        <fullName evidence="6">Small ribosomal subunit protein eS12</fullName>
    </recommendedName>
    <alternativeName>
        <fullName>40S ribosomal protein S12</fullName>
    </alternativeName>
</protein>
<evidence type="ECO:0000250" key="1">
    <source>
        <dbReference type="UniProtKB" id="P63323"/>
    </source>
</evidence>
<evidence type="ECO:0000250" key="2">
    <source>
        <dbReference type="UniProtKB" id="P80455"/>
    </source>
</evidence>
<evidence type="ECO:0000269" key="3">
    <source>
    </source>
</evidence>
<evidence type="ECO:0000269" key="4">
    <source>
    </source>
</evidence>
<evidence type="ECO:0000269" key="5">
    <source ref="7"/>
</evidence>
<evidence type="ECO:0000303" key="6">
    <source>
    </source>
</evidence>
<evidence type="ECO:0000305" key="7"/>
<evidence type="ECO:0000312" key="8">
    <source>
        <dbReference type="HGNC" id="HGNC:10385"/>
    </source>
</evidence>
<evidence type="ECO:0007744" key="9">
    <source>
        <dbReference type="PDB" id="7MQ8"/>
    </source>
</evidence>
<evidence type="ECO:0007744" key="10">
    <source>
        <dbReference type="PDB" id="7MQ9"/>
    </source>
</evidence>
<evidence type="ECO:0007744" key="11">
    <source>
        <dbReference type="PDB" id="7MQA"/>
    </source>
</evidence>
<evidence type="ECO:0007744" key="12">
    <source>
    </source>
</evidence>
<evidence type="ECO:0007744" key="13">
    <source>
    </source>
</evidence>
<evidence type="ECO:0007744" key="14">
    <source>
    </source>
</evidence>
<evidence type="ECO:0007744" key="15">
    <source>
    </source>
</evidence>
<evidence type="ECO:0007744" key="16">
    <source>
    </source>
</evidence>
<evidence type="ECO:0007829" key="17">
    <source>
        <dbReference type="PDB" id="6ZLW"/>
    </source>
</evidence>
<evidence type="ECO:0007829" key="18">
    <source>
        <dbReference type="PDB" id="6ZMT"/>
    </source>
</evidence>
<evidence type="ECO:0007829" key="19">
    <source>
        <dbReference type="PDB" id="6ZVH"/>
    </source>
</evidence>
<evidence type="ECO:0007829" key="20">
    <source>
        <dbReference type="PDB" id="6ZXE"/>
    </source>
</evidence>
<evidence type="ECO:0007829" key="21">
    <source>
        <dbReference type="PDB" id="7R4X"/>
    </source>
</evidence>
<evidence type="ECO:0007829" key="22">
    <source>
        <dbReference type="PDB" id="7TQL"/>
    </source>
</evidence>
<gene>
    <name evidence="8" type="primary">RPS12</name>
</gene>